<sequence length="95" mass="10916">MLNLLCAVYKSSKKADTYLYVPGRDDFSRVPESLMKMFGAPRFIMIMPIKKDRTLGQVDIQTLRDELTKNGFYLQLPPPEENLLKQHLAAQSPKD</sequence>
<accession>Q15S25</accession>
<dbReference type="EMBL" id="CP000388">
    <property type="protein sequence ID" value="ABG41313.1"/>
    <property type="molecule type" value="Genomic_DNA"/>
</dbReference>
<dbReference type="RefSeq" id="WP_011575571.1">
    <property type="nucleotide sequence ID" value="NC_008228.1"/>
</dbReference>
<dbReference type="SMR" id="Q15S25"/>
<dbReference type="STRING" id="342610.Patl_2802"/>
<dbReference type="KEGG" id="pat:Patl_2802"/>
<dbReference type="eggNOG" id="COG3100">
    <property type="taxonomic scope" value="Bacteria"/>
</dbReference>
<dbReference type="HOGENOM" id="CLU_155118_1_0_6"/>
<dbReference type="OrthoDB" id="7062382at2"/>
<dbReference type="Proteomes" id="UP000001981">
    <property type="component" value="Chromosome"/>
</dbReference>
<dbReference type="Gene3D" id="3.10.510.20">
    <property type="entry name" value="YcgL domain"/>
    <property type="match status" value="1"/>
</dbReference>
<dbReference type="HAMAP" id="MF_01866">
    <property type="entry name" value="UPF0745"/>
    <property type="match status" value="1"/>
</dbReference>
<dbReference type="InterPro" id="IPR038068">
    <property type="entry name" value="YcgL-like_sf"/>
</dbReference>
<dbReference type="InterPro" id="IPR027354">
    <property type="entry name" value="YcgL_dom"/>
</dbReference>
<dbReference type="PANTHER" id="PTHR38109">
    <property type="entry name" value="PROTEIN YCGL"/>
    <property type="match status" value="1"/>
</dbReference>
<dbReference type="PANTHER" id="PTHR38109:SF1">
    <property type="entry name" value="PROTEIN YCGL"/>
    <property type="match status" value="1"/>
</dbReference>
<dbReference type="Pfam" id="PF05166">
    <property type="entry name" value="YcgL"/>
    <property type="match status" value="1"/>
</dbReference>
<dbReference type="SUPFAM" id="SSF160191">
    <property type="entry name" value="YcgL-like"/>
    <property type="match status" value="1"/>
</dbReference>
<dbReference type="PROSITE" id="PS51648">
    <property type="entry name" value="YCGL"/>
    <property type="match status" value="1"/>
</dbReference>
<evidence type="ECO:0000255" key="1">
    <source>
        <dbReference type="HAMAP-Rule" id="MF_01866"/>
    </source>
</evidence>
<protein>
    <recommendedName>
        <fullName evidence="1">YcgL domain-containing protein Patl_2802</fullName>
    </recommendedName>
</protein>
<organism>
    <name type="scientific">Pseudoalteromonas atlantica (strain T6c / ATCC BAA-1087)</name>
    <dbReference type="NCBI Taxonomy" id="3042615"/>
    <lineage>
        <taxon>Bacteria</taxon>
        <taxon>Pseudomonadati</taxon>
        <taxon>Pseudomonadota</taxon>
        <taxon>Gammaproteobacteria</taxon>
        <taxon>Alteromonadales</taxon>
        <taxon>Alteromonadaceae</taxon>
        <taxon>Paraglaciecola</taxon>
    </lineage>
</organism>
<name>Y2802_PSEA6</name>
<reference key="1">
    <citation type="submission" date="2006-06" db="EMBL/GenBank/DDBJ databases">
        <title>Complete sequence of Pseudoalteromonas atlantica T6c.</title>
        <authorList>
            <consortium name="US DOE Joint Genome Institute"/>
            <person name="Copeland A."/>
            <person name="Lucas S."/>
            <person name="Lapidus A."/>
            <person name="Barry K."/>
            <person name="Detter J.C."/>
            <person name="Glavina del Rio T."/>
            <person name="Hammon N."/>
            <person name="Israni S."/>
            <person name="Dalin E."/>
            <person name="Tice H."/>
            <person name="Pitluck S."/>
            <person name="Saunders E."/>
            <person name="Brettin T."/>
            <person name="Bruce D."/>
            <person name="Han C."/>
            <person name="Tapia R."/>
            <person name="Gilna P."/>
            <person name="Schmutz J."/>
            <person name="Larimer F."/>
            <person name="Land M."/>
            <person name="Hauser L."/>
            <person name="Kyrpides N."/>
            <person name="Kim E."/>
            <person name="Karls A.C."/>
            <person name="Bartlett D."/>
            <person name="Higgins B.P."/>
            <person name="Richardson P."/>
        </authorList>
    </citation>
    <scope>NUCLEOTIDE SEQUENCE [LARGE SCALE GENOMIC DNA]</scope>
    <source>
        <strain>T6c / ATCC BAA-1087</strain>
    </source>
</reference>
<gene>
    <name type="ordered locus">Patl_2802</name>
</gene>
<proteinExistence type="inferred from homology"/>
<feature type="chain" id="PRO_0000375325" description="YcgL domain-containing protein Patl_2802">
    <location>
        <begin position="1"/>
        <end position="95"/>
    </location>
</feature>
<feature type="domain" description="YcgL" evidence="1">
    <location>
        <begin position="4"/>
        <end position="88"/>
    </location>
</feature>